<keyword id="KW-0068">Autocatalytic cleavage</keyword>
<keyword id="KW-0963">Cytoplasm</keyword>
<keyword id="KW-0378">Hydrolase</keyword>
<keyword id="KW-0645">Protease</keyword>
<keyword id="KW-0647">Proteasome</keyword>
<keyword id="KW-0888">Threonine protease</keyword>
<keyword id="KW-0865">Zymogen</keyword>
<accession>C7P6N4</accession>
<name>PSB_METFA</name>
<feature type="propeptide" id="PRO_0000397334" description="Removed in mature form; by autocatalysis" evidence="1">
    <location>
        <begin position="1"/>
        <end position="6"/>
    </location>
</feature>
<feature type="chain" id="PRO_0000397335" description="Proteasome subunit beta">
    <location>
        <begin position="7"/>
        <end position="224"/>
    </location>
</feature>
<feature type="active site" description="Nucleophile" evidence="1">
    <location>
        <position position="7"/>
    </location>
</feature>
<protein>
    <recommendedName>
        <fullName evidence="1">Proteasome subunit beta</fullName>
        <ecNumber evidence="1">3.4.25.1</ecNumber>
    </recommendedName>
    <alternativeName>
        <fullName evidence="1">20S proteasome beta subunit</fullName>
    </alternativeName>
    <alternativeName>
        <fullName evidence="1">Proteasome core protein PsmB</fullName>
    </alternativeName>
</protein>
<reference key="1">
    <citation type="submission" date="2009-08" db="EMBL/GenBank/DDBJ databases">
        <title>Complete sequence of chromosome of Methanocaldococcus fervens AG86.</title>
        <authorList>
            <consortium name="US DOE Joint Genome Institute"/>
            <person name="Lucas S."/>
            <person name="Copeland A."/>
            <person name="Lapidus A."/>
            <person name="Glavina del Rio T."/>
            <person name="Tice H."/>
            <person name="Bruce D."/>
            <person name="Goodwin L."/>
            <person name="Pitluck S."/>
            <person name="Chertkov O."/>
            <person name="Detter J.C."/>
            <person name="Han C."/>
            <person name="Tapia R."/>
            <person name="Larimer F."/>
            <person name="Land M."/>
            <person name="Hauser L."/>
            <person name="Kyrpides N."/>
            <person name="Ovchinnikova G."/>
            <person name="Lupa-Sieprawska M."/>
            <person name="Whitman W.B."/>
        </authorList>
    </citation>
    <scope>NUCLEOTIDE SEQUENCE [LARGE SCALE GENOMIC DNA]</scope>
    <source>
        <strain>DSM 4213 / JCM 15782 / AG86</strain>
    </source>
</reference>
<comment type="function">
    <text evidence="1">Component of the proteasome core, a large protease complex with broad specificity involved in protein degradation.</text>
</comment>
<comment type="catalytic activity">
    <reaction evidence="1">
        <text>Cleavage of peptide bonds with very broad specificity.</text>
        <dbReference type="EC" id="3.4.25.1"/>
    </reaction>
</comment>
<comment type="activity regulation">
    <text evidence="1">The formation of the proteasomal ATPase PAN-20S proteasome complex, via the docking of the C-termini of PAN into the intersubunit pockets in the alpha-rings, triggers opening of the gate for substrate entry. Interconversion between the open-gate and close-gate conformations leads to a dynamic regulation of the 20S proteasome proteolysis activity.</text>
</comment>
<comment type="subunit">
    <text evidence="1">The 20S proteasome core is composed of 14 alpha and 14 beta subunits that assemble into four stacked heptameric rings, resulting in a barrel-shaped structure. The two inner rings, each composed of seven catalytic beta subunits, are sandwiched by two outer rings, each composed of seven alpha subunits. The catalytic chamber with the active sites is on the inside of the barrel. Has a gated structure, the ends of the cylinder being occluded by the N-termini of the alpha-subunits. Is capped at one or both ends by the proteasome regulatory ATPase, PAN.</text>
</comment>
<comment type="subcellular location">
    <subcellularLocation>
        <location evidence="1">Cytoplasm</location>
    </subcellularLocation>
</comment>
<comment type="similarity">
    <text evidence="1">Belongs to the peptidase T1B family.</text>
</comment>
<evidence type="ECO:0000255" key="1">
    <source>
        <dbReference type="HAMAP-Rule" id="MF_02113"/>
    </source>
</evidence>
<gene>
    <name evidence="1" type="primary">psmB</name>
    <name type="ordered locus">Mefer_0382</name>
</gene>
<proteinExistence type="inferred from homology"/>
<organism>
    <name type="scientific">Methanocaldococcus fervens (strain DSM 4213 / JCM 15782 / AG86)</name>
    <name type="common">Methanococcus fervens</name>
    <dbReference type="NCBI Taxonomy" id="573064"/>
    <lineage>
        <taxon>Archaea</taxon>
        <taxon>Methanobacteriati</taxon>
        <taxon>Methanobacteriota</taxon>
        <taxon>Methanomada group</taxon>
        <taxon>Methanococci</taxon>
        <taxon>Methanococcales</taxon>
        <taxon>Methanocaldococcaceae</taxon>
        <taxon>Methanocaldococcus</taxon>
    </lineage>
</organism>
<sequence length="224" mass="24350">MDVMKGTTTVGLICDDAVILATDKRASMGNLVADKEAKKLYKIDDYIALTIAGSVGDAQAIVRLLTAEAKLYKMRTGKNISPLACATLLSNILHSNRYFPFLTQLIIGGYDLLEGAKLFSLDPLGGMNEEKTFTATGSGSPIAYGVLEAGYDRDMPVEEGIKLALKALKSAMERDTYSGNGISLAVITKEGVKIFEDEEIEKILNEITSKSKKKTTKRSRRKSK</sequence>
<dbReference type="EC" id="3.4.25.1" evidence="1"/>
<dbReference type="EMBL" id="CP001696">
    <property type="protein sequence ID" value="ACV24216.1"/>
    <property type="molecule type" value="Genomic_DNA"/>
</dbReference>
<dbReference type="RefSeq" id="WP_015790956.1">
    <property type="nucleotide sequence ID" value="NC_013156.1"/>
</dbReference>
<dbReference type="SMR" id="C7P6N4"/>
<dbReference type="STRING" id="573064.Mefer_0382"/>
<dbReference type="MEROPS" id="T01.002"/>
<dbReference type="GeneID" id="8365052"/>
<dbReference type="KEGG" id="mfe:Mefer_0382"/>
<dbReference type="eggNOG" id="arCOG00970">
    <property type="taxonomic scope" value="Archaea"/>
</dbReference>
<dbReference type="HOGENOM" id="CLU_035750_7_2_2"/>
<dbReference type="OrthoDB" id="6330at2157"/>
<dbReference type="Proteomes" id="UP000001495">
    <property type="component" value="Chromosome"/>
</dbReference>
<dbReference type="GO" id="GO:0005737">
    <property type="term" value="C:cytoplasm"/>
    <property type="evidence" value="ECO:0007669"/>
    <property type="project" value="UniProtKB-SubCell"/>
</dbReference>
<dbReference type="GO" id="GO:0019774">
    <property type="term" value="C:proteasome core complex, beta-subunit complex"/>
    <property type="evidence" value="ECO:0007669"/>
    <property type="project" value="UniProtKB-UniRule"/>
</dbReference>
<dbReference type="GO" id="GO:0004298">
    <property type="term" value="F:threonine-type endopeptidase activity"/>
    <property type="evidence" value="ECO:0007669"/>
    <property type="project" value="UniProtKB-UniRule"/>
</dbReference>
<dbReference type="GO" id="GO:0010498">
    <property type="term" value="P:proteasomal protein catabolic process"/>
    <property type="evidence" value="ECO:0007669"/>
    <property type="project" value="UniProtKB-UniRule"/>
</dbReference>
<dbReference type="CDD" id="cd03764">
    <property type="entry name" value="proteasome_beta_archeal"/>
    <property type="match status" value="1"/>
</dbReference>
<dbReference type="FunFam" id="3.60.20.10:FF:000049">
    <property type="entry name" value="Proteasome subunit beta"/>
    <property type="match status" value="1"/>
</dbReference>
<dbReference type="Gene3D" id="3.60.20.10">
    <property type="entry name" value="Glutamine Phosphoribosylpyrophosphate, subunit 1, domain 1"/>
    <property type="match status" value="1"/>
</dbReference>
<dbReference type="HAMAP" id="MF_02113_A">
    <property type="entry name" value="Proteasome_B_A"/>
    <property type="match status" value="1"/>
</dbReference>
<dbReference type="InterPro" id="IPR029055">
    <property type="entry name" value="Ntn_hydrolases_N"/>
</dbReference>
<dbReference type="InterPro" id="IPR019983">
    <property type="entry name" value="Pept_T1A_Psome_bsu_arc"/>
</dbReference>
<dbReference type="InterPro" id="IPR000243">
    <property type="entry name" value="Pept_T1A_subB"/>
</dbReference>
<dbReference type="InterPro" id="IPR016050">
    <property type="entry name" value="Proteasome_bsu_CS"/>
</dbReference>
<dbReference type="InterPro" id="IPR001353">
    <property type="entry name" value="Proteasome_sua/b"/>
</dbReference>
<dbReference type="InterPro" id="IPR023333">
    <property type="entry name" value="Proteasome_suB-type"/>
</dbReference>
<dbReference type="NCBIfam" id="TIGR03634">
    <property type="entry name" value="arc_protsome_B"/>
    <property type="match status" value="1"/>
</dbReference>
<dbReference type="PANTHER" id="PTHR32194:SF0">
    <property type="entry name" value="ATP-DEPENDENT PROTEASE SUBUNIT HSLV"/>
    <property type="match status" value="1"/>
</dbReference>
<dbReference type="PANTHER" id="PTHR32194">
    <property type="entry name" value="METALLOPROTEASE TLDD"/>
    <property type="match status" value="1"/>
</dbReference>
<dbReference type="Pfam" id="PF00227">
    <property type="entry name" value="Proteasome"/>
    <property type="match status" value="1"/>
</dbReference>
<dbReference type="PRINTS" id="PR00141">
    <property type="entry name" value="PROTEASOME"/>
</dbReference>
<dbReference type="SUPFAM" id="SSF56235">
    <property type="entry name" value="N-terminal nucleophile aminohydrolases (Ntn hydrolases)"/>
    <property type="match status" value="1"/>
</dbReference>
<dbReference type="PROSITE" id="PS00854">
    <property type="entry name" value="PROTEASOME_BETA_1"/>
    <property type="match status" value="1"/>
</dbReference>
<dbReference type="PROSITE" id="PS51476">
    <property type="entry name" value="PROTEASOME_BETA_2"/>
    <property type="match status" value="1"/>
</dbReference>